<protein>
    <recommendedName>
        <fullName evidence="1">Type III pantothenate kinase</fullName>
        <ecNumber evidence="1">2.7.1.33</ecNumber>
    </recommendedName>
    <alternativeName>
        <fullName evidence="1">PanK-III</fullName>
    </alternativeName>
    <alternativeName>
        <fullName evidence="1">Pantothenic acid kinase</fullName>
    </alternativeName>
</protein>
<dbReference type="EC" id="2.7.1.33" evidence="1"/>
<dbReference type="EMBL" id="CP000509">
    <property type="protein sequence ID" value="ABL80006.1"/>
    <property type="molecule type" value="Genomic_DNA"/>
</dbReference>
<dbReference type="RefSeq" id="WP_011753957.1">
    <property type="nucleotide sequence ID" value="NC_008699.1"/>
</dbReference>
<dbReference type="SMR" id="A1SDX1"/>
<dbReference type="STRING" id="196162.Noca_0464"/>
<dbReference type="KEGG" id="nca:Noca_0464"/>
<dbReference type="eggNOG" id="COG1521">
    <property type="taxonomic scope" value="Bacteria"/>
</dbReference>
<dbReference type="HOGENOM" id="CLU_066627_1_0_11"/>
<dbReference type="OrthoDB" id="9804707at2"/>
<dbReference type="UniPathway" id="UPA00241">
    <property type="reaction ID" value="UER00352"/>
</dbReference>
<dbReference type="Proteomes" id="UP000000640">
    <property type="component" value="Chromosome"/>
</dbReference>
<dbReference type="GO" id="GO:0005737">
    <property type="term" value="C:cytoplasm"/>
    <property type="evidence" value="ECO:0007669"/>
    <property type="project" value="UniProtKB-SubCell"/>
</dbReference>
<dbReference type="GO" id="GO:0005524">
    <property type="term" value="F:ATP binding"/>
    <property type="evidence" value="ECO:0007669"/>
    <property type="project" value="UniProtKB-UniRule"/>
</dbReference>
<dbReference type="GO" id="GO:0046872">
    <property type="term" value="F:metal ion binding"/>
    <property type="evidence" value="ECO:0007669"/>
    <property type="project" value="UniProtKB-KW"/>
</dbReference>
<dbReference type="GO" id="GO:0004594">
    <property type="term" value="F:pantothenate kinase activity"/>
    <property type="evidence" value="ECO:0007669"/>
    <property type="project" value="UniProtKB-UniRule"/>
</dbReference>
<dbReference type="GO" id="GO:0015937">
    <property type="term" value="P:coenzyme A biosynthetic process"/>
    <property type="evidence" value="ECO:0007669"/>
    <property type="project" value="UniProtKB-UniRule"/>
</dbReference>
<dbReference type="CDD" id="cd24015">
    <property type="entry name" value="ASKHA_NBD_PanK-III"/>
    <property type="match status" value="1"/>
</dbReference>
<dbReference type="Gene3D" id="3.30.420.40">
    <property type="match status" value="2"/>
</dbReference>
<dbReference type="HAMAP" id="MF_01274">
    <property type="entry name" value="Pantothen_kinase_3"/>
    <property type="match status" value="1"/>
</dbReference>
<dbReference type="InterPro" id="IPR043129">
    <property type="entry name" value="ATPase_NBD"/>
</dbReference>
<dbReference type="InterPro" id="IPR004619">
    <property type="entry name" value="Type_III_PanK"/>
</dbReference>
<dbReference type="NCBIfam" id="TIGR00671">
    <property type="entry name" value="baf"/>
    <property type="match status" value="1"/>
</dbReference>
<dbReference type="NCBIfam" id="NF009845">
    <property type="entry name" value="PRK13318.1-3"/>
    <property type="match status" value="1"/>
</dbReference>
<dbReference type="NCBIfam" id="NF009855">
    <property type="entry name" value="PRK13321.1"/>
    <property type="match status" value="1"/>
</dbReference>
<dbReference type="PANTHER" id="PTHR34265">
    <property type="entry name" value="TYPE III PANTOTHENATE KINASE"/>
    <property type="match status" value="1"/>
</dbReference>
<dbReference type="PANTHER" id="PTHR34265:SF1">
    <property type="entry name" value="TYPE III PANTOTHENATE KINASE"/>
    <property type="match status" value="1"/>
</dbReference>
<dbReference type="Pfam" id="PF03309">
    <property type="entry name" value="Pan_kinase"/>
    <property type="match status" value="1"/>
</dbReference>
<dbReference type="SUPFAM" id="SSF53067">
    <property type="entry name" value="Actin-like ATPase domain"/>
    <property type="match status" value="2"/>
</dbReference>
<organism>
    <name type="scientific">Nocardioides sp. (strain ATCC BAA-499 / JS614)</name>
    <dbReference type="NCBI Taxonomy" id="196162"/>
    <lineage>
        <taxon>Bacteria</taxon>
        <taxon>Bacillati</taxon>
        <taxon>Actinomycetota</taxon>
        <taxon>Actinomycetes</taxon>
        <taxon>Propionibacteriales</taxon>
        <taxon>Nocardioidaceae</taxon>
        <taxon>Nocardioides</taxon>
    </lineage>
</organism>
<gene>
    <name evidence="1" type="primary">coaX</name>
    <name type="ordered locus">Noca_0464</name>
</gene>
<accession>A1SDX1</accession>
<proteinExistence type="inferred from homology"/>
<sequence>MPLLCADIGNSHTVLGLVSGGSVLADWRVATDERNTADDWSVLLRGLLGAALEEIDGIAVCATVPAVLHEWREMLTRHFPAVRHVVVEPGVRTGVPVLMDNPREVGTDRIINALAAVHEYGGPAIVVDFGGTATTFDVVSAQGQYVGGSISPGIELSLESLGRRGAQLRKVELLRPRSVIAKNTVEALQSGMVFGVAAQVEGIVDRMIGELGVGATDVQVIATGYLAPVVLDECRCFTHHAPWLTLRGLELVFERNA</sequence>
<feature type="chain" id="PRO_1000054398" description="Type III pantothenate kinase">
    <location>
        <begin position="1"/>
        <end position="257"/>
    </location>
</feature>
<feature type="active site" description="Proton acceptor" evidence="1">
    <location>
        <position position="108"/>
    </location>
</feature>
<feature type="binding site" evidence="1">
    <location>
        <begin position="7"/>
        <end position="14"/>
    </location>
    <ligand>
        <name>ATP</name>
        <dbReference type="ChEBI" id="CHEBI:30616"/>
    </ligand>
</feature>
<feature type="binding site" evidence="1">
    <location>
        <begin position="106"/>
        <end position="109"/>
    </location>
    <ligand>
        <name>substrate</name>
    </ligand>
</feature>
<feature type="binding site" evidence="1">
    <location>
        <position position="128"/>
    </location>
    <ligand>
        <name>K(+)</name>
        <dbReference type="ChEBI" id="CHEBI:29103"/>
    </ligand>
</feature>
<feature type="binding site" evidence="1">
    <location>
        <position position="132"/>
    </location>
    <ligand>
        <name>ATP</name>
        <dbReference type="ChEBI" id="CHEBI:30616"/>
    </ligand>
</feature>
<feature type="binding site" evidence="1">
    <location>
        <position position="184"/>
    </location>
    <ligand>
        <name>substrate</name>
    </ligand>
</feature>
<name>COAX_NOCSJ</name>
<reference key="1">
    <citation type="submission" date="2006-12" db="EMBL/GenBank/DDBJ databases">
        <title>Complete sequence of chromosome 1 of Nocardioides sp. JS614.</title>
        <authorList>
            <person name="Copeland A."/>
            <person name="Lucas S."/>
            <person name="Lapidus A."/>
            <person name="Barry K."/>
            <person name="Detter J.C."/>
            <person name="Glavina del Rio T."/>
            <person name="Hammon N."/>
            <person name="Israni S."/>
            <person name="Dalin E."/>
            <person name="Tice H."/>
            <person name="Pitluck S."/>
            <person name="Thompson L.S."/>
            <person name="Brettin T."/>
            <person name="Bruce D."/>
            <person name="Han C."/>
            <person name="Tapia R."/>
            <person name="Schmutz J."/>
            <person name="Larimer F."/>
            <person name="Land M."/>
            <person name="Hauser L."/>
            <person name="Kyrpides N."/>
            <person name="Kim E."/>
            <person name="Mattes T."/>
            <person name="Gossett J."/>
            <person name="Richardson P."/>
        </authorList>
    </citation>
    <scope>NUCLEOTIDE SEQUENCE [LARGE SCALE GENOMIC DNA]</scope>
    <source>
        <strain>ATCC BAA-499 / JS614</strain>
    </source>
</reference>
<comment type="function">
    <text evidence="1">Catalyzes the phosphorylation of pantothenate (Pan), the first step in CoA biosynthesis.</text>
</comment>
<comment type="catalytic activity">
    <reaction evidence="1">
        <text>(R)-pantothenate + ATP = (R)-4'-phosphopantothenate + ADP + H(+)</text>
        <dbReference type="Rhea" id="RHEA:16373"/>
        <dbReference type="ChEBI" id="CHEBI:10986"/>
        <dbReference type="ChEBI" id="CHEBI:15378"/>
        <dbReference type="ChEBI" id="CHEBI:29032"/>
        <dbReference type="ChEBI" id="CHEBI:30616"/>
        <dbReference type="ChEBI" id="CHEBI:456216"/>
        <dbReference type="EC" id="2.7.1.33"/>
    </reaction>
</comment>
<comment type="cofactor">
    <cofactor evidence="1">
        <name>NH4(+)</name>
        <dbReference type="ChEBI" id="CHEBI:28938"/>
    </cofactor>
    <cofactor evidence="1">
        <name>K(+)</name>
        <dbReference type="ChEBI" id="CHEBI:29103"/>
    </cofactor>
    <text evidence="1">A monovalent cation. Ammonium or potassium.</text>
</comment>
<comment type="pathway">
    <text evidence="1">Cofactor biosynthesis; coenzyme A biosynthesis; CoA from (R)-pantothenate: step 1/5.</text>
</comment>
<comment type="subunit">
    <text evidence="1">Homodimer.</text>
</comment>
<comment type="subcellular location">
    <subcellularLocation>
        <location evidence="1">Cytoplasm</location>
    </subcellularLocation>
</comment>
<comment type="similarity">
    <text evidence="1">Belongs to the type III pantothenate kinase family.</text>
</comment>
<keyword id="KW-0067">ATP-binding</keyword>
<keyword id="KW-0173">Coenzyme A biosynthesis</keyword>
<keyword id="KW-0963">Cytoplasm</keyword>
<keyword id="KW-0418">Kinase</keyword>
<keyword id="KW-0479">Metal-binding</keyword>
<keyword id="KW-0547">Nucleotide-binding</keyword>
<keyword id="KW-0630">Potassium</keyword>
<keyword id="KW-1185">Reference proteome</keyword>
<keyword id="KW-0808">Transferase</keyword>
<evidence type="ECO:0000255" key="1">
    <source>
        <dbReference type="HAMAP-Rule" id="MF_01274"/>
    </source>
</evidence>